<name>Y2026_MYCBO</name>
<dbReference type="EMBL" id="LT708304">
    <property type="protein sequence ID" value="SIU00633.1"/>
    <property type="molecule type" value="Genomic_DNA"/>
</dbReference>
<dbReference type="RefSeq" id="NP_855676.1">
    <property type="nucleotide sequence ID" value="NC_002945.3"/>
</dbReference>
<dbReference type="SMR" id="P64920"/>
<dbReference type="KEGG" id="mbo:BQ2027_MB2026C"/>
<dbReference type="PATRIC" id="fig|233413.5.peg.2225"/>
<dbReference type="Proteomes" id="UP000001419">
    <property type="component" value="Chromosome"/>
</dbReference>
<dbReference type="GO" id="GO:0008757">
    <property type="term" value="F:S-adenosylmethionine-dependent methyltransferase activity"/>
    <property type="evidence" value="ECO:0007669"/>
    <property type="project" value="InterPro"/>
</dbReference>
<dbReference type="CDD" id="cd02440">
    <property type="entry name" value="AdoMet_MTases"/>
    <property type="match status" value="1"/>
</dbReference>
<dbReference type="Gene3D" id="3.40.50.150">
    <property type="entry name" value="Vaccinia Virus protein VP39"/>
    <property type="match status" value="1"/>
</dbReference>
<dbReference type="InterPro" id="IPR013216">
    <property type="entry name" value="Methyltransf_11"/>
</dbReference>
<dbReference type="InterPro" id="IPR029063">
    <property type="entry name" value="SAM-dependent_MTases_sf"/>
</dbReference>
<dbReference type="Pfam" id="PF08241">
    <property type="entry name" value="Methyltransf_11"/>
    <property type="match status" value="1"/>
</dbReference>
<dbReference type="SUPFAM" id="SSF53335">
    <property type="entry name" value="S-adenosyl-L-methionine-dependent methyltransferases"/>
    <property type="match status" value="1"/>
</dbReference>
<reference key="1">
    <citation type="journal article" date="2003" name="Proc. Natl. Acad. Sci. U.S.A.">
        <title>The complete genome sequence of Mycobacterium bovis.</title>
        <authorList>
            <person name="Garnier T."/>
            <person name="Eiglmeier K."/>
            <person name="Camus J.-C."/>
            <person name="Medina N."/>
            <person name="Mansoor H."/>
            <person name="Pryor M."/>
            <person name="Duthoy S."/>
            <person name="Grondin S."/>
            <person name="Lacroix C."/>
            <person name="Monsempe C."/>
            <person name="Simon S."/>
            <person name="Harris B."/>
            <person name="Atkin R."/>
            <person name="Doggett J."/>
            <person name="Mayes R."/>
            <person name="Keating L."/>
            <person name="Wheeler P.R."/>
            <person name="Parkhill J."/>
            <person name="Barrell B.G."/>
            <person name="Cole S.T."/>
            <person name="Gordon S.V."/>
            <person name="Hewinson R.G."/>
        </authorList>
    </citation>
    <scope>NUCLEOTIDE SEQUENCE [LARGE SCALE GENOMIC DNA]</scope>
    <source>
        <strain>ATCC BAA-935 / AF2122/97</strain>
    </source>
</reference>
<reference key="2">
    <citation type="journal article" date="2017" name="Genome Announc.">
        <title>Updated reference genome sequence and annotation of Mycobacterium bovis AF2122/97.</title>
        <authorList>
            <person name="Malone K.M."/>
            <person name="Farrell D."/>
            <person name="Stuber T.P."/>
            <person name="Schubert O.T."/>
            <person name="Aebersold R."/>
            <person name="Robbe-Austerman S."/>
            <person name="Gordon S.V."/>
        </authorList>
    </citation>
    <scope>NUCLEOTIDE SEQUENCE [LARGE SCALE GENOMIC DNA]</scope>
    <scope>GENOME REANNOTATION</scope>
    <source>
        <strain>ATCC BAA-935 / AF2122/97</strain>
    </source>
</reference>
<feature type="chain" id="PRO_0000103931" description="Uncharacterized protein Mb2026c">
    <location>
        <begin position="1"/>
        <end position="285"/>
    </location>
</feature>
<protein>
    <recommendedName>
        <fullName>Uncharacterized protein Mb2026c</fullName>
    </recommendedName>
</protein>
<accession>P64920</accession>
<accession>A0A1R3XZX4</accession>
<accession>Q10853</accession>
<accession>X2BJU1</accession>
<keyword id="KW-1185">Reference proteome</keyword>
<proteinExistence type="predicted"/>
<organism>
    <name type="scientific">Mycobacterium bovis (strain ATCC BAA-935 / AF2122/97)</name>
    <dbReference type="NCBI Taxonomy" id="233413"/>
    <lineage>
        <taxon>Bacteria</taxon>
        <taxon>Bacillati</taxon>
        <taxon>Actinomycetota</taxon>
        <taxon>Actinomycetes</taxon>
        <taxon>Mycobacteriales</taxon>
        <taxon>Mycobacteriaceae</taxon>
        <taxon>Mycobacterium</taxon>
        <taxon>Mycobacterium tuberculosis complex</taxon>
    </lineage>
</organism>
<sequence>MVKRSRATRLSPSIWSGWESPQCRSIRARLLLPRGRSRPPNADCCWNQLAVTPDTRMPASSAAGRDAAAYDAWYDSPTGRPILATEVAALRPLIEVFAQPRLEIGVGTGRFADLLGVRFGLDPSRDALMFARRRGVLVANAVGEAVPFVSRHFGAVLMAFTLCFVTDPAAIFRETRRLLADGGGLVIGFLPRGTPWADLYALRAARGQPGYRDARFYTAAELEQLLADSGFRVIARRCTLHQPPGLARYDIEAAHDGIQAGAGFVAISAVDQAHEPKDDHPLESE</sequence>
<gene>
    <name type="ordered locus">BQ2027_MB2026C</name>
</gene>
<evidence type="ECO:0000305" key="1"/>
<comment type="similarity">
    <text evidence="1">To M.jannaschii MJ0638, MJ1123 and MJ1252.</text>
</comment>